<accession>C6DZQ7</accession>
<evidence type="ECO:0000255" key="1">
    <source>
        <dbReference type="HAMAP-Rule" id="MF_00011"/>
    </source>
</evidence>
<comment type="function">
    <text evidence="1">Plays an important role in the de novo pathway of purine nucleotide biosynthesis. Catalyzes the first committed step in the biosynthesis of AMP from IMP.</text>
</comment>
<comment type="catalytic activity">
    <reaction evidence="1">
        <text>IMP + L-aspartate + GTP = N(6)-(1,2-dicarboxyethyl)-AMP + GDP + phosphate + 2 H(+)</text>
        <dbReference type="Rhea" id="RHEA:15753"/>
        <dbReference type="ChEBI" id="CHEBI:15378"/>
        <dbReference type="ChEBI" id="CHEBI:29991"/>
        <dbReference type="ChEBI" id="CHEBI:37565"/>
        <dbReference type="ChEBI" id="CHEBI:43474"/>
        <dbReference type="ChEBI" id="CHEBI:57567"/>
        <dbReference type="ChEBI" id="CHEBI:58053"/>
        <dbReference type="ChEBI" id="CHEBI:58189"/>
        <dbReference type="EC" id="6.3.4.4"/>
    </reaction>
</comment>
<comment type="cofactor">
    <cofactor evidence="1">
        <name>Mg(2+)</name>
        <dbReference type="ChEBI" id="CHEBI:18420"/>
    </cofactor>
    <text evidence="1">Binds 1 Mg(2+) ion per subunit.</text>
</comment>
<comment type="pathway">
    <text evidence="1">Purine metabolism; AMP biosynthesis via de novo pathway; AMP from IMP: step 1/2.</text>
</comment>
<comment type="subunit">
    <text evidence="1">Homodimer.</text>
</comment>
<comment type="subcellular location">
    <subcellularLocation>
        <location evidence="1">Cytoplasm</location>
    </subcellularLocation>
</comment>
<comment type="similarity">
    <text evidence="1">Belongs to the adenylosuccinate synthetase family.</text>
</comment>
<protein>
    <recommendedName>
        <fullName evidence="1">Adenylosuccinate synthetase</fullName>
        <shortName evidence="1">AMPSase</shortName>
        <shortName evidence="1">AdSS</shortName>
        <ecNumber evidence="1">6.3.4.4</ecNumber>
    </recommendedName>
    <alternativeName>
        <fullName evidence="1">IMP--aspartate ligase</fullName>
    </alternativeName>
</protein>
<keyword id="KW-0963">Cytoplasm</keyword>
<keyword id="KW-0342">GTP-binding</keyword>
<keyword id="KW-0436">Ligase</keyword>
<keyword id="KW-0460">Magnesium</keyword>
<keyword id="KW-0479">Metal-binding</keyword>
<keyword id="KW-0547">Nucleotide-binding</keyword>
<keyword id="KW-0658">Purine biosynthesis</keyword>
<reference key="1">
    <citation type="submission" date="2009-07" db="EMBL/GenBank/DDBJ databases">
        <title>Complete sequence of Geobacter sp. M21.</title>
        <authorList>
            <consortium name="US DOE Joint Genome Institute"/>
            <person name="Lucas S."/>
            <person name="Copeland A."/>
            <person name="Lapidus A."/>
            <person name="Glavina del Rio T."/>
            <person name="Dalin E."/>
            <person name="Tice H."/>
            <person name="Bruce D."/>
            <person name="Goodwin L."/>
            <person name="Pitluck S."/>
            <person name="Saunders E."/>
            <person name="Brettin T."/>
            <person name="Detter J.C."/>
            <person name="Han C."/>
            <person name="Larimer F."/>
            <person name="Land M."/>
            <person name="Hauser L."/>
            <person name="Kyrpides N."/>
            <person name="Ovchinnikova G."/>
            <person name="Lovley D."/>
        </authorList>
    </citation>
    <scope>NUCLEOTIDE SEQUENCE [LARGE SCALE GENOMIC DNA]</scope>
    <source>
        <strain>M21</strain>
    </source>
</reference>
<proteinExistence type="inferred from homology"/>
<feature type="chain" id="PRO_1000201757" description="Adenylosuccinate synthetase">
    <location>
        <begin position="1"/>
        <end position="432"/>
    </location>
</feature>
<feature type="active site" description="Proton acceptor" evidence="1">
    <location>
        <position position="13"/>
    </location>
</feature>
<feature type="active site" description="Proton donor" evidence="1">
    <location>
        <position position="41"/>
    </location>
</feature>
<feature type="binding site" evidence="1">
    <location>
        <begin position="12"/>
        <end position="18"/>
    </location>
    <ligand>
        <name>GTP</name>
        <dbReference type="ChEBI" id="CHEBI:37565"/>
    </ligand>
</feature>
<feature type="binding site" description="in other chain" evidence="1">
    <location>
        <begin position="13"/>
        <end position="16"/>
    </location>
    <ligand>
        <name>IMP</name>
        <dbReference type="ChEBI" id="CHEBI:58053"/>
        <note>ligand shared between dimeric partners</note>
    </ligand>
</feature>
<feature type="binding site" evidence="1">
    <location>
        <position position="13"/>
    </location>
    <ligand>
        <name>Mg(2+)</name>
        <dbReference type="ChEBI" id="CHEBI:18420"/>
    </ligand>
</feature>
<feature type="binding site" description="in other chain" evidence="1">
    <location>
        <begin position="38"/>
        <end position="41"/>
    </location>
    <ligand>
        <name>IMP</name>
        <dbReference type="ChEBI" id="CHEBI:58053"/>
        <note>ligand shared between dimeric partners</note>
    </ligand>
</feature>
<feature type="binding site" evidence="1">
    <location>
        <begin position="40"/>
        <end position="42"/>
    </location>
    <ligand>
        <name>GTP</name>
        <dbReference type="ChEBI" id="CHEBI:37565"/>
    </ligand>
</feature>
<feature type="binding site" evidence="1">
    <location>
        <position position="40"/>
    </location>
    <ligand>
        <name>Mg(2+)</name>
        <dbReference type="ChEBI" id="CHEBI:18420"/>
    </ligand>
</feature>
<feature type="binding site" description="in other chain" evidence="1">
    <location>
        <position position="130"/>
    </location>
    <ligand>
        <name>IMP</name>
        <dbReference type="ChEBI" id="CHEBI:58053"/>
        <note>ligand shared between dimeric partners</note>
    </ligand>
</feature>
<feature type="binding site" evidence="1">
    <location>
        <position position="144"/>
    </location>
    <ligand>
        <name>IMP</name>
        <dbReference type="ChEBI" id="CHEBI:58053"/>
        <note>ligand shared between dimeric partners</note>
    </ligand>
</feature>
<feature type="binding site" description="in other chain" evidence="1">
    <location>
        <position position="225"/>
    </location>
    <ligand>
        <name>IMP</name>
        <dbReference type="ChEBI" id="CHEBI:58053"/>
        <note>ligand shared between dimeric partners</note>
    </ligand>
</feature>
<feature type="binding site" description="in other chain" evidence="1">
    <location>
        <position position="240"/>
    </location>
    <ligand>
        <name>IMP</name>
        <dbReference type="ChEBI" id="CHEBI:58053"/>
        <note>ligand shared between dimeric partners</note>
    </ligand>
</feature>
<feature type="binding site" evidence="1">
    <location>
        <begin position="300"/>
        <end position="306"/>
    </location>
    <ligand>
        <name>substrate</name>
    </ligand>
</feature>
<feature type="binding site" description="in other chain" evidence="1">
    <location>
        <position position="304"/>
    </location>
    <ligand>
        <name>IMP</name>
        <dbReference type="ChEBI" id="CHEBI:58053"/>
        <note>ligand shared between dimeric partners</note>
    </ligand>
</feature>
<feature type="binding site" evidence="1">
    <location>
        <position position="306"/>
    </location>
    <ligand>
        <name>GTP</name>
        <dbReference type="ChEBI" id="CHEBI:37565"/>
    </ligand>
</feature>
<feature type="binding site" evidence="1">
    <location>
        <begin position="332"/>
        <end position="334"/>
    </location>
    <ligand>
        <name>GTP</name>
        <dbReference type="ChEBI" id="CHEBI:37565"/>
    </ligand>
</feature>
<feature type="binding site" evidence="1">
    <location>
        <begin position="414"/>
        <end position="416"/>
    </location>
    <ligand>
        <name>GTP</name>
        <dbReference type="ChEBI" id="CHEBI:37565"/>
    </ligand>
</feature>
<gene>
    <name evidence="1" type="primary">purA</name>
    <name type="ordered locus">GM21_0565</name>
</gene>
<name>PURA_GEOSM</name>
<sequence length="432" mass="47499">MANVVVIGAQWGDEGKGKVVDIYTEFADDVVRYQGGNNAGHTLVVGDEKVILHLIPSGILHEGKRCVIGNGVVLDPEVFIMEITKLKANGYLKDDKMLLLSEALHIIMPYHKRIDIAREKKSGSKKIGTTGRGIGPAYEDKIGRRGIRLMDLLDEKAFTRKVKEVLEEKNLILTQLLGEQPFTFEEIYEEYMKYAETLRKYAADTSLILHQEIKAGKSLLFEGAQGTLLDVDHGTYPYVTSSSTCSGGACTGSGVSPREIHEVIGISKAYATRVGSGPFPTELEDETGEQLRQAGREFGSTTGRPRRTGWYDALVARYAVRINGLSGIAITKLDVLSGQETVKVCTAYNYKGQVLTEVPASLEVMELCTPIYEELPGWNEDITGAKSMAELPKNARDYVARVEELSGAPVVLVSVGPRRDETIVLRNPFQLD</sequence>
<dbReference type="EC" id="6.3.4.4" evidence="1"/>
<dbReference type="EMBL" id="CP001661">
    <property type="protein sequence ID" value="ACT16639.1"/>
    <property type="molecule type" value="Genomic_DNA"/>
</dbReference>
<dbReference type="SMR" id="C6DZQ7"/>
<dbReference type="STRING" id="443144.GM21_0565"/>
<dbReference type="KEGG" id="gem:GM21_0565"/>
<dbReference type="eggNOG" id="COG0104">
    <property type="taxonomic scope" value="Bacteria"/>
</dbReference>
<dbReference type="HOGENOM" id="CLU_029848_0_0_7"/>
<dbReference type="OrthoDB" id="9807553at2"/>
<dbReference type="UniPathway" id="UPA00075">
    <property type="reaction ID" value="UER00335"/>
</dbReference>
<dbReference type="GO" id="GO:0005737">
    <property type="term" value="C:cytoplasm"/>
    <property type="evidence" value="ECO:0007669"/>
    <property type="project" value="UniProtKB-SubCell"/>
</dbReference>
<dbReference type="GO" id="GO:0004019">
    <property type="term" value="F:adenylosuccinate synthase activity"/>
    <property type="evidence" value="ECO:0007669"/>
    <property type="project" value="UniProtKB-UniRule"/>
</dbReference>
<dbReference type="GO" id="GO:0005525">
    <property type="term" value="F:GTP binding"/>
    <property type="evidence" value="ECO:0007669"/>
    <property type="project" value="UniProtKB-UniRule"/>
</dbReference>
<dbReference type="GO" id="GO:0000287">
    <property type="term" value="F:magnesium ion binding"/>
    <property type="evidence" value="ECO:0007669"/>
    <property type="project" value="UniProtKB-UniRule"/>
</dbReference>
<dbReference type="GO" id="GO:0044208">
    <property type="term" value="P:'de novo' AMP biosynthetic process"/>
    <property type="evidence" value="ECO:0007669"/>
    <property type="project" value="UniProtKB-UniRule"/>
</dbReference>
<dbReference type="GO" id="GO:0046040">
    <property type="term" value="P:IMP metabolic process"/>
    <property type="evidence" value="ECO:0007669"/>
    <property type="project" value="TreeGrafter"/>
</dbReference>
<dbReference type="CDD" id="cd03108">
    <property type="entry name" value="AdSS"/>
    <property type="match status" value="1"/>
</dbReference>
<dbReference type="FunFam" id="1.10.300.10:FF:000001">
    <property type="entry name" value="Adenylosuccinate synthetase"/>
    <property type="match status" value="1"/>
</dbReference>
<dbReference type="FunFam" id="3.90.170.10:FF:000001">
    <property type="entry name" value="Adenylosuccinate synthetase"/>
    <property type="match status" value="1"/>
</dbReference>
<dbReference type="Gene3D" id="3.40.440.10">
    <property type="entry name" value="Adenylosuccinate Synthetase, subunit A, domain 1"/>
    <property type="match status" value="1"/>
</dbReference>
<dbReference type="Gene3D" id="1.10.300.10">
    <property type="entry name" value="Adenylosuccinate Synthetase, subunit A, domain 2"/>
    <property type="match status" value="1"/>
</dbReference>
<dbReference type="Gene3D" id="3.90.170.10">
    <property type="entry name" value="Adenylosuccinate Synthetase, subunit A, domain 3"/>
    <property type="match status" value="1"/>
</dbReference>
<dbReference type="HAMAP" id="MF_00011">
    <property type="entry name" value="Adenylosucc_synth"/>
    <property type="match status" value="1"/>
</dbReference>
<dbReference type="InterPro" id="IPR018220">
    <property type="entry name" value="Adenylosuccin_syn_GTP-bd"/>
</dbReference>
<dbReference type="InterPro" id="IPR033128">
    <property type="entry name" value="Adenylosuccin_syn_Lys_AS"/>
</dbReference>
<dbReference type="InterPro" id="IPR042109">
    <property type="entry name" value="Adenylosuccinate_synth_dom1"/>
</dbReference>
<dbReference type="InterPro" id="IPR042110">
    <property type="entry name" value="Adenylosuccinate_synth_dom2"/>
</dbReference>
<dbReference type="InterPro" id="IPR042111">
    <property type="entry name" value="Adenylosuccinate_synth_dom3"/>
</dbReference>
<dbReference type="InterPro" id="IPR001114">
    <property type="entry name" value="Adenylosuccinate_synthetase"/>
</dbReference>
<dbReference type="InterPro" id="IPR027417">
    <property type="entry name" value="P-loop_NTPase"/>
</dbReference>
<dbReference type="NCBIfam" id="NF002223">
    <property type="entry name" value="PRK01117.1"/>
    <property type="match status" value="1"/>
</dbReference>
<dbReference type="NCBIfam" id="TIGR00184">
    <property type="entry name" value="purA"/>
    <property type="match status" value="1"/>
</dbReference>
<dbReference type="PANTHER" id="PTHR11846">
    <property type="entry name" value="ADENYLOSUCCINATE SYNTHETASE"/>
    <property type="match status" value="1"/>
</dbReference>
<dbReference type="PANTHER" id="PTHR11846:SF0">
    <property type="entry name" value="ADENYLOSUCCINATE SYNTHETASE"/>
    <property type="match status" value="1"/>
</dbReference>
<dbReference type="Pfam" id="PF00709">
    <property type="entry name" value="Adenylsucc_synt"/>
    <property type="match status" value="1"/>
</dbReference>
<dbReference type="SMART" id="SM00788">
    <property type="entry name" value="Adenylsucc_synt"/>
    <property type="match status" value="1"/>
</dbReference>
<dbReference type="SUPFAM" id="SSF52540">
    <property type="entry name" value="P-loop containing nucleoside triphosphate hydrolases"/>
    <property type="match status" value="1"/>
</dbReference>
<dbReference type="PROSITE" id="PS01266">
    <property type="entry name" value="ADENYLOSUCCIN_SYN_1"/>
    <property type="match status" value="1"/>
</dbReference>
<dbReference type="PROSITE" id="PS00513">
    <property type="entry name" value="ADENYLOSUCCIN_SYN_2"/>
    <property type="match status" value="1"/>
</dbReference>
<organism>
    <name type="scientific">Geobacter sp. (strain M21)</name>
    <dbReference type="NCBI Taxonomy" id="443144"/>
    <lineage>
        <taxon>Bacteria</taxon>
        <taxon>Pseudomonadati</taxon>
        <taxon>Thermodesulfobacteriota</taxon>
        <taxon>Desulfuromonadia</taxon>
        <taxon>Geobacterales</taxon>
        <taxon>Geobacteraceae</taxon>
        <taxon>Geobacter</taxon>
    </lineage>
</organism>